<accession>A9QYP0</accession>
<sequence>MLDSIKIKLQYLLPKQGLTQLAGWGANKQGGWLTQLVIKAFARYYKVDMKEAQDPEFSAYRTFNEFFVRPLRAGVRPVVAEENLLAQPADGAISQLGAIREGQILQAKGHNYSLEALLAGNYLLAAEFQNGQFVTTYLAPRDYHRVHMPCDGVLREMIYVPGDLFSVNPLTAANVPNLFARNERVICIFDTAFGPMAQILVGATIVGSIETVWAGTITPPREGVIRRWTYPQAGCEGAITLEKGQEMGRFKLGSTVINLFAEGKVYFAPQLNSGAVTRMGEVLAEAVPTTPSY</sequence>
<comment type="function">
    <text evidence="1">Catalyzes the formation of phosphatidylethanolamine (PtdEtn) from phosphatidylserine (PtdSer).</text>
</comment>
<comment type="catalytic activity">
    <reaction evidence="1">
        <text>a 1,2-diacyl-sn-glycero-3-phospho-L-serine + H(+) = a 1,2-diacyl-sn-glycero-3-phosphoethanolamine + CO2</text>
        <dbReference type="Rhea" id="RHEA:20828"/>
        <dbReference type="ChEBI" id="CHEBI:15378"/>
        <dbReference type="ChEBI" id="CHEBI:16526"/>
        <dbReference type="ChEBI" id="CHEBI:57262"/>
        <dbReference type="ChEBI" id="CHEBI:64612"/>
        <dbReference type="EC" id="4.1.1.65"/>
    </reaction>
</comment>
<comment type="cofactor">
    <cofactor evidence="1">
        <name>pyruvate</name>
        <dbReference type="ChEBI" id="CHEBI:15361"/>
    </cofactor>
    <text evidence="1">Binds 1 pyruvoyl group covalently per subunit.</text>
</comment>
<comment type="pathway">
    <text evidence="1">Phospholipid metabolism; phosphatidylethanolamine biosynthesis; phosphatidylethanolamine from CDP-diacylglycerol: step 2/2.</text>
</comment>
<comment type="subunit">
    <text evidence="1">Heterodimer of a large membrane-associated beta subunit and a small pyruvoyl-containing alpha subunit.</text>
</comment>
<comment type="subcellular location">
    <subcellularLocation>
        <location evidence="1">Cell membrane</location>
        <topology evidence="1">Peripheral membrane protein</topology>
    </subcellularLocation>
</comment>
<comment type="PTM">
    <text evidence="1">Is synthesized initially as an inactive proenzyme. Formation of the active enzyme involves a self-maturation process in which the active site pyruvoyl group is generated from an internal serine residue via an autocatalytic post-translational modification. Two non-identical subunits are generated from the proenzyme in this reaction, and the pyruvate is formed at the N-terminus of the alpha chain, which is derived from the carboxyl end of the proenzyme. The autoendoproteolytic cleavage occurs by a canonical serine protease mechanism, in which the side chain hydroxyl group of the serine supplies its oxygen atom to form the C-terminus of the beta chain, while the remainder of the serine residue undergoes an oxidative deamination to produce ammonia and the pyruvoyl prosthetic group on the alpha chain. During this reaction, the Ser that is part of the protease active site of the proenzyme becomes the pyruvoyl prosthetic group, which constitutes an essential element of the active site of the mature decarboxylase.</text>
</comment>
<comment type="similarity">
    <text evidence="1">Belongs to the phosphatidylserine decarboxylase family. PSD-B subfamily. Prokaryotic type I sub-subfamily.</text>
</comment>
<keyword id="KW-1003">Cell membrane</keyword>
<keyword id="KW-0210">Decarboxylase</keyword>
<keyword id="KW-0444">Lipid biosynthesis</keyword>
<keyword id="KW-0443">Lipid metabolism</keyword>
<keyword id="KW-0456">Lyase</keyword>
<keyword id="KW-0472">Membrane</keyword>
<keyword id="KW-0594">Phospholipid biosynthesis</keyword>
<keyword id="KW-1208">Phospholipid metabolism</keyword>
<keyword id="KW-0670">Pyruvate</keyword>
<keyword id="KW-0865">Zymogen</keyword>
<protein>
    <recommendedName>
        <fullName evidence="1">Phosphatidylserine decarboxylase proenzyme</fullName>
        <ecNumber evidence="1">4.1.1.65</ecNumber>
    </recommendedName>
    <component>
        <recommendedName>
            <fullName evidence="1">Phosphatidylserine decarboxylase alpha chain</fullName>
        </recommendedName>
    </component>
    <component>
        <recommendedName>
            <fullName evidence="1">Phosphatidylserine decarboxylase beta chain</fullName>
        </recommendedName>
    </component>
</protein>
<feature type="chain" id="PRO_1000131424" description="Phosphatidylserine decarboxylase beta chain" evidence="1">
    <location>
        <begin position="1"/>
        <end position="253"/>
    </location>
</feature>
<feature type="chain" id="PRO_1000131425" description="Phosphatidylserine decarboxylase alpha chain" evidence="1">
    <location>
        <begin position="254"/>
        <end position="293"/>
    </location>
</feature>
<feature type="active site" description="Charge relay system; for autoendoproteolytic cleavage activity" evidence="1">
    <location>
        <position position="90"/>
    </location>
</feature>
<feature type="active site" description="Charge relay system; for autoendoproteolytic cleavage activity" evidence="1">
    <location>
        <position position="147"/>
    </location>
</feature>
<feature type="active site" description="Charge relay system; for autoendoproteolytic cleavage activity" evidence="1">
    <location>
        <position position="254"/>
    </location>
</feature>
<feature type="active site" description="Schiff-base intermediate with substrate; via pyruvic acid; for decarboxylase activity" evidence="1">
    <location>
        <position position="254"/>
    </location>
</feature>
<feature type="site" description="Cleavage (non-hydrolytic); by autocatalysis" evidence="1">
    <location>
        <begin position="253"/>
        <end position="254"/>
    </location>
</feature>
<feature type="modified residue" description="Pyruvic acid (Ser); by autocatalysis" evidence="1">
    <location>
        <position position="254"/>
    </location>
</feature>
<reference key="1">
    <citation type="journal article" date="2010" name="J. Bacteriol.">
        <title>Genome sequence of the deep-rooted Yersinia pestis strain Angola reveals new insights into the evolution and pangenome of the plague bacterium.</title>
        <authorList>
            <person name="Eppinger M."/>
            <person name="Worsham P.L."/>
            <person name="Nikolich M.P."/>
            <person name="Riley D.R."/>
            <person name="Sebastian Y."/>
            <person name="Mou S."/>
            <person name="Achtman M."/>
            <person name="Lindler L.E."/>
            <person name="Ravel J."/>
        </authorList>
    </citation>
    <scope>NUCLEOTIDE SEQUENCE [LARGE SCALE GENOMIC DNA]</scope>
    <source>
        <strain>Angola</strain>
    </source>
</reference>
<name>PSD_YERPG</name>
<organism>
    <name type="scientific">Yersinia pestis bv. Antiqua (strain Angola)</name>
    <dbReference type="NCBI Taxonomy" id="349746"/>
    <lineage>
        <taxon>Bacteria</taxon>
        <taxon>Pseudomonadati</taxon>
        <taxon>Pseudomonadota</taxon>
        <taxon>Gammaproteobacteria</taxon>
        <taxon>Enterobacterales</taxon>
        <taxon>Yersiniaceae</taxon>
        <taxon>Yersinia</taxon>
    </lineage>
</organism>
<evidence type="ECO:0000255" key="1">
    <source>
        <dbReference type="HAMAP-Rule" id="MF_00662"/>
    </source>
</evidence>
<dbReference type="EC" id="4.1.1.65" evidence="1"/>
<dbReference type="EMBL" id="CP000901">
    <property type="protein sequence ID" value="ABX85735.1"/>
    <property type="molecule type" value="Genomic_DNA"/>
</dbReference>
<dbReference type="SMR" id="A9QYP0"/>
<dbReference type="KEGG" id="ypg:YpAngola_A0710"/>
<dbReference type="PATRIC" id="fig|349746.12.peg.1657"/>
<dbReference type="UniPathway" id="UPA00558">
    <property type="reaction ID" value="UER00616"/>
</dbReference>
<dbReference type="GO" id="GO:0005886">
    <property type="term" value="C:plasma membrane"/>
    <property type="evidence" value="ECO:0007669"/>
    <property type="project" value="UniProtKB-SubCell"/>
</dbReference>
<dbReference type="GO" id="GO:0004609">
    <property type="term" value="F:phosphatidylserine decarboxylase activity"/>
    <property type="evidence" value="ECO:0007669"/>
    <property type="project" value="UniProtKB-UniRule"/>
</dbReference>
<dbReference type="GO" id="GO:0006646">
    <property type="term" value="P:phosphatidylethanolamine biosynthetic process"/>
    <property type="evidence" value="ECO:0007669"/>
    <property type="project" value="UniProtKB-UniRule"/>
</dbReference>
<dbReference type="HAMAP" id="MF_00662">
    <property type="entry name" value="PS_decarb_PSD_B_type1"/>
    <property type="match status" value="1"/>
</dbReference>
<dbReference type="InterPro" id="IPR003817">
    <property type="entry name" value="PS_Dcarbxylase"/>
</dbReference>
<dbReference type="InterPro" id="IPR033177">
    <property type="entry name" value="PSD-B"/>
</dbReference>
<dbReference type="InterPro" id="IPR033178">
    <property type="entry name" value="PSD_type1_pro"/>
</dbReference>
<dbReference type="NCBIfam" id="TIGR00163">
    <property type="entry name" value="PS_decarb"/>
    <property type="match status" value="1"/>
</dbReference>
<dbReference type="PANTHER" id="PTHR10067">
    <property type="entry name" value="PHOSPHATIDYLSERINE DECARBOXYLASE"/>
    <property type="match status" value="1"/>
</dbReference>
<dbReference type="PANTHER" id="PTHR10067:SF6">
    <property type="entry name" value="PHOSPHATIDYLSERINE DECARBOXYLASE PROENZYME, MITOCHONDRIAL"/>
    <property type="match status" value="1"/>
</dbReference>
<dbReference type="Pfam" id="PF02666">
    <property type="entry name" value="PS_Dcarbxylase"/>
    <property type="match status" value="1"/>
</dbReference>
<gene>
    <name evidence="1" type="primary">psd</name>
    <name type="ordered locus">YpAngola_A0710</name>
</gene>
<proteinExistence type="inferred from homology"/>